<name>Y2004_MYCTU</name>
<evidence type="ECO:0000255" key="1"/>
<evidence type="ECO:0000269" key="2">
    <source>
    </source>
</evidence>
<evidence type="ECO:0000269" key="3">
    <source>
    </source>
</evidence>
<evidence type="ECO:0000269" key="4">
    <source>
    </source>
</evidence>
<evidence type="ECO:0000269" key="5">
    <source>
    </source>
</evidence>
<sequence length="498" mass="54423">MDSPTNDGTCDAHPVTDEPFIDVRETHTAVVVLAGDRAFKAKKPVVTDFCDFRTAEQRERACIREFELNSRLAAQSYLGIAHLSDPSGGHAEPVVVMRRYRDKQRLASMVTAGLPVEGALDAIAEVLARFHQRAQRNRCIDTQGEVGAVARRWHENLAELRHHADKVVSGDVIRRIEHMVDEFVSGREVLFAGRIKEGCIVDGHADLLADDIFLVDGEPALLDCLEFEDELRYLDRIDDAAFLAMDLEFLGRKDLGDYFLAGYAVRSGDTAPASLRDFYIAYRAVVRAKVECVRFSQGKPEAAADAVRHLIIATQHLQHATVRLALVGGNPGTGKSTLARGVAELVGAQVISTDDVRRRLRDCGVITGEPGVLDSGLYSRANVVAVYQEALRKARLLLGSGHSVILDGTWGDPQMRACARRLAADTHSAIVEFRCSATVDVMADRIVARAGGNSDATAEIAAALAARQADWDTGHRIDTAGPRERSVGQAYHIWRSAI</sequence>
<keyword id="KW-0067">ATP-binding</keyword>
<keyword id="KW-0134">Cell wall</keyword>
<keyword id="KW-0547">Nucleotide-binding</keyword>
<keyword id="KW-1185">Reference proteome</keyword>
<keyword id="KW-0964">Secreted</keyword>
<accession>P9WLN3</accession>
<accession>L0T9W8</accession>
<accession>P0A5F9</accession>
<accession>Q10852</accession>
<reference key="1">
    <citation type="submission" date="1996-06" db="EMBL/GenBank/DDBJ databases">
        <authorList>
            <person name="Suarez T."/>
            <person name="Cardenas C."/>
            <person name="Murillo L.A."/>
            <person name="Avila M."/>
            <person name="Mejia G."/>
            <person name="Patarroyo M.E."/>
        </authorList>
    </citation>
    <scope>NUCLEOTIDE SEQUENCE [GENOMIC DNA]</scope>
    <source>
        <strain>ATCC 25618 / H37Rv</strain>
    </source>
</reference>
<reference key="2">
    <citation type="journal article" date="1998" name="Nature">
        <title>Deciphering the biology of Mycobacterium tuberculosis from the complete genome sequence.</title>
        <authorList>
            <person name="Cole S.T."/>
            <person name="Brosch R."/>
            <person name="Parkhill J."/>
            <person name="Garnier T."/>
            <person name="Churcher C.M."/>
            <person name="Harris D.E."/>
            <person name="Gordon S.V."/>
            <person name="Eiglmeier K."/>
            <person name="Gas S."/>
            <person name="Barry C.E. III"/>
            <person name="Tekaia F."/>
            <person name="Badcock K."/>
            <person name="Basham D."/>
            <person name="Brown D."/>
            <person name="Chillingworth T."/>
            <person name="Connor R."/>
            <person name="Davies R.M."/>
            <person name="Devlin K."/>
            <person name="Feltwell T."/>
            <person name="Gentles S."/>
            <person name="Hamlin N."/>
            <person name="Holroyd S."/>
            <person name="Hornsby T."/>
            <person name="Jagels K."/>
            <person name="Krogh A."/>
            <person name="McLean J."/>
            <person name="Moule S."/>
            <person name="Murphy L.D."/>
            <person name="Oliver S."/>
            <person name="Osborne J."/>
            <person name="Quail M.A."/>
            <person name="Rajandream M.A."/>
            <person name="Rogers J."/>
            <person name="Rutter S."/>
            <person name="Seeger K."/>
            <person name="Skelton S."/>
            <person name="Squares S."/>
            <person name="Squares R."/>
            <person name="Sulston J.E."/>
            <person name="Taylor K."/>
            <person name="Whitehead S."/>
            <person name="Barrell B.G."/>
        </authorList>
    </citation>
    <scope>NUCLEOTIDE SEQUENCE [LARGE SCALE GENOMIC DNA]</scope>
    <source>
        <strain>ATCC 25618 / H37Rv</strain>
    </source>
</reference>
<reference key="3">
    <citation type="journal article" date="2003" name="J. Exp. Med.">
        <title>Inhibition of respiration by nitric oxide induces a Mycobacterium tuberculosis dormancy program.</title>
        <authorList>
            <person name="Voskuil M.I."/>
            <person name="Schnappinger D."/>
            <person name="Visconti K.C."/>
            <person name="Harrell M.I."/>
            <person name="Dolganov G.M."/>
            <person name="Sherman D.R."/>
            <person name="Schoolnik G.K."/>
        </authorList>
    </citation>
    <scope>INDUCTION BY NITRIC OXIDE (NO) AND BY HYPOXIA</scope>
    <scope>DORMANCY REGULON</scope>
    <source>
        <strain>ATCC 25618 / H37Rv</strain>
    </source>
</reference>
<reference key="4">
    <citation type="journal article" date="2005" name="Protein Sci.">
        <title>Identifying putative Mycobacterium tuberculosis Rv2004c protein sequences that bind specifically to U937 macrophages and A549 epithelial cells.</title>
        <authorList>
            <person name="Forero M."/>
            <person name="Puentes A."/>
            <person name="Cortes J."/>
            <person name="Castillo F."/>
            <person name="Vera R."/>
            <person name="Rodriguez L.E."/>
            <person name="Valbuena J."/>
            <person name="Ocampo M."/>
            <person name="Curtidor H."/>
            <person name="Rosas J."/>
            <person name="Garcia J."/>
            <person name="Barrera G."/>
            <person name="Alfonso R."/>
            <person name="Patarroyo M.A."/>
            <person name="Patarroyo M.E."/>
        </authorList>
    </citation>
    <scope>BINDING TO HUMAN CELL LINES</scope>
    <scope>INDUCTION</scope>
    <scope>SUBCELLULAR LOCATION</scope>
</reference>
<reference key="5">
    <citation type="journal article" date="2008" name="Cell Host Microbe">
        <title>Mycobacterium tuberculosis senses host-derived carbon monoxide during macrophage infection.</title>
        <authorList>
            <person name="Shiloh M.U."/>
            <person name="Manzanillo P."/>
            <person name="Cox J.S."/>
        </authorList>
    </citation>
    <scope>INDUCTION BY CARBON MONOXIDE (CO)</scope>
    <source>
        <strain>ATCC 35801 / TMC 107 / Erdman</strain>
    </source>
</reference>
<reference key="6">
    <citation type="journal article" date="2008" name="J. Biol. Chem.">
        <title>Heme oxygenase-1-derived carbon monoxide induces the Mycobacterium tuberculosis dormancy regulon.</title>
        <authorList>
            <person name="Kumar A."/>
            <person name="Deshane J.S."/>
            <person name="Crossman D.K."/>
            <person name="Bolisetty S."/>
            <person name="Yan B.S."/>
            <person name="Kramnik I."/>
            <person name="Agarwal A."/>
            <person name="Steyn A.J."/>
        </authorList>
    </citation>
    <scope>INDUCTION BY CARBON MONOXIDE (CO)</scope>
    <scope>DORMANCY REGULON</scope>
    <source>
        <strain>ATCC 25618 / H37Rv</strain>
    </source>
</reference>
<reference key="7">
    <citation type="journal article" date="2011" name="Mol. Cell. Proteomics">
        <title>Proteogenomic analysis of Mycobacterium tuberculosis by high resolution mass spectrometry.</title>
        <authorList>
            <person name="Kelkar D.S."/>
            <person name="Kumar D."/>
            <person name="Kumar P."/>
            <person name="Balakrishnan L."/>
            <person name="Muthusamy B."/>
            <person name="Yadav A.K."/>
            <person name="Shrivastava P."/>
            <person name="Marimuthu A."/>
            <person name="Anand S."/>
            <person name="Sundaram H."/>
            <person name="Kingsbury R."/>
            <person name="Harsha H.C."/>
            <person name="Nair B."/>
            <person name="Prasad T.S."/>
            <person name="Chauhan D.S."/>
            <person name="Katoch K."/>
            <person name="Katoch V.M."/>
            <person name="Kumar P."/>
            <person name="Chaerkady R."/>
            <person name="Ramachandran S."/>
            <person name="Dash D."/>
            <person name="Pandey A."/>
        </authorList>
    </citation>
    <scope>IDENTIFICATION BY MASS SPECTROMETRY [LARGE SCALE ANALYSIS]</scope>
    <source>
        <strain>ATCC 25618 / H37Rv</strain>
    </source>
</reference>
<comment type="function">
    <text>Some isolated peptides of this protein are able to bind to human U937 monocytoblastic and A549 epithelial cell lines.</text>
</comment>
<comment type="subcellular location">
    <subcellularLocation>
        <location evidence="3">Secreted</location>
        <location evidence="3">Cell wall</location>
    </subcellularLocation>
</comment>
<comment type="induction">
    <text evidence="2 3 4 5">Expressed in growing cells (at protein level). A member of the dormancy regulon. Induced in response to reduced oxygen tension (hypoxia), low levels of nitric oxide (NO) and carbon monoxide (CO). It is hoped that this regulon will give insight into the latent, or dormant phase of infection.</text>
</comment>
<comment type="miscellaneous">
    <text>Has been detected by antibody binding and Western blot in the cell wall fraction but no signal sequence is predicted by bioinformatic programs.</text>
</comment>
<protein>
    <recommendedName>
        <fullName>Uncharacterized protein Rv2004c</fullName>
    </recommendedName>
</protein>
<gene>
    <name type="ordered locus">Rv2004c</name>
    <name type="ORF">MTCY39.13</name>
</gene>
<feature type="chain" id="PRO_0000103932" description="Uncharacterized protein Rv2004c">
    <location>
        <begin position="1"/>
        <end position="498"/>
    </location>
</feature>
<feature type="binding site" evidence="1">
    <location>
        <begin position="329"/>
        <end position="336"/>
    </location>
    <ligand>
        <name>ATP</name>
        <dbReference type="ChEBI" id="CHEBI:30616"/>
    </ligand>
</feature>
<proteinExistence type="evidence at protein level"/>
<dbReference type="EMBL" id="U62548">
    <property type="protein sequence ID" value="AAB61716.1"/>
    <property type="molecule type" value="Genomic_DNA"/>
</dbReference>
<dbReference type="EMBL" id="AL123456">
    <property type="protein sequence ID" value="CCP44776.1"/>
    <property type="molecule type" value="Genomic_DNA"/>
</dbReference>
<dbReference type="PIR" id="B70759">
    <property type="entry name" value="B70759"/>
</dbReference>
<dbReference type="RefSeq" id="NP_216520.1">
    <property type="nucleotide sequence ID" value="NC_000962.3"/>
</dbReference>
<dbReference type="RefSeq" id="WP_003410057.1">
    <property type="nucleotide sequence ID" value="NZ_NVQJ01000043.1"/>
</dbReference>
<dbReference type="STRING" id="83332.Rv2004c"/>
<dbReference type="PaxDb" id="83332-Rv2004c"/>
<dbReference type="DNASU" id="888817"/>
<dbReference type="GeneID" id="888817"/>
<dbReference type="KEGG" id="mtu:Rv2004c"/>
<dbReference type="KEGG" id="mtv:RVBD_2004c"/>
<dbReference type="TubercuList" id="Rv2004c"/>
<dbReference type="eggNOG" id="COG0645">
    <property type="taxonomic scope" value="Bacteria"/>
</dbReference>
<dbReference type="eggNOG" id="COG2187">
    <property type="taxonomic scope" value="Bacteria"/>
</dbReference>
<dbReference type="InParanoid" id="P9WLN3"/>
<dbReference type="OrthoDB" id="9810277at2"/>
<dbReference type="PhylomeDB" id="P9WLN3"/>
<dbReference type="Proteomes" id="UP000001584">
    <property type="component" value="Chromosome"/>
</dbReference>
<dbReference type="GO" id="GO:0005576">
    <property type="term" value="C:extracellular region"/>
    <property type="evidence" value="ECO:0007669"/>
    <property type="project" value="UniProtKB-KW"/>
</dbReference>
<dbReference type="GO" id="GO:0009274">
    <property type="term" value="C:peptidoglycan-based cell wall"/>
    <property type="evidence" value="ECO:0007005"/>
    <property type="project" value="MTBBASE"/>
</dbReference>
<dbReference type="GO" id="GO:0005524">
    <property type="term" value="F:ATP binding"/>
    <property type="evidence" value="ECO:0007669"/>
    <property type="project" value="UniProtKB-KW"/>
</dbReference>
<dbReference type="GO" id="GO:0046812">
    <property type="term" value="F:host cell surface binding"/>
    <property type="evidence" value="ECO:0000314"/>
    <property type="project" value="MTBBASE"/>
</dbReference>
<dbReference type="Gene3D" id="3.40.50.300">
    <property type="entry name" value="P-loop containing nucleotide triphosphate hydrolases"/>
    <property type="match status" value="1"/>
</dbReference>
<dbReference type="InterPro" id="IPR052732">
    <property type="entry name" value="Cell-binding_unc_protein"/>
</dbReference>
<dbReference type="InterPro" id="IPR011009">
    <property type="entry name" value="Kinase-like_dom_sf"/>
</dbReference>
<dbReference type="InterPro" id="IPR027417">
    <property type="entry name" value="P-loop_NTPase"/>
</dbReference>
<dbReference type="PANTHER" id="PTHR43883:SF1">
    <property type="entry name" value="GLUCONOKINASE"/>
    <property type="match status" value="1"/>
</dbReference>
<dbReference type="PANTHER" id="PTHR43883">
    <property type="entry name" value="SLR0207 PROTEIN"/>
    <property type="match status" value="1"/>
</dbReference>
<dbReference type="Pfam" id="PF13671">
    <property type="entry name" value="AAA_33"/>
    <property type="match status" value="1"/>
</dbReference>
<dbReference type="SUPFAM" id="SSF52540">
    <property type="entry name" value="P-loop containing nucleoside triphosphate hydrolases"/>
    <property type="match status" value="1"/>
</dbReference>
<dbReference type="SUPFAM" id="SSF56112">
    <property type="entry name" value="Protein kinase-like (PK-like)"/>
    <property type="match status" value="1"/>
</dbReference>
<organism>
    <name type="scientific">Mycobacterium tuberculosis (strain ATCC 25618 / H37Rv)</name>
    <dbReference type="NCBI Taxonomy" id="83332"/>
    <lineage>
        <taxon>Bacteria</taxon>
        <taxon>Bacillati</taxon>
        <taxon>Actinomycetota</taxon>
        <taxon>Actinomycetes</taxon>
        <taxon>Mycobacteriales</taxon>
        <taxon>Mycobacteriaceae</taxon>
        <taxon>Mycobacterium</taxon>
        <taxon>Mycobacterium tuberculosis complex</taxon>
    </lineage>
</organism>